<keyword id="KW-0965">Cell junction</keyword>
<keyword id="KW-1003">Cell membrane</keyword>
<keyword id="KW-1015">Disulfide bond</keyword>
<keyword id="KW-0325">Glycoprotein</keyword>
<keyword id="KW-0393">Immunoglobulin domain</keyword>
<keyword id="KW-0472">Membrane</keyword>
<keyword id="KW-1267">Proteomics identification</keyword>
<keyword id="KW-1185">Reference proteome</keyword>
<keyword id="KW-0677">Repeat</keyword>
<keyword id="KW-0796">Tight junction</keyword>
<keyword id="KW-0812">Transmembrane</keyword>
<keyword id="KW-1133">Transmembrane helix</keyword>
<feature type="chain" id="PRO_0000316295" description="Immunoglobulin superfamily member 5">
    <location>
        <begin position="1"/>
        <end position="407"/>
    </location>
</feature>
<feature type="topological domain" description="Extracellular" evidence="3">
    <location>
        <begin position="1"/>
        <end position="266"/>
    </location>
</feature>
<feature type="transmembrane region" description="Helical" evidence="3">
    <location>
        <begin position="267"/>
        <end position="285"/>
    </location>
</feature>
<feature type="topological domain" description="Cytoplasmic" evidence="3">
    <location>
        <begin position="286"/>
        <end position="407"/>
    </location>
</feature>
<feature type="domain" description="Ig-like V-type 1">
    <location>
        <begin position="39"/>
        <end position="139"/>
    </location>
</feature>
<feature type="domain" description="Ig-like V-type 2">
    <location>
        <begin position="142"/>
        <end position="231"/>
    </location>
</feature>
<feature type="region of interest" description="Disordered" evidence="5">
    <location>
        <begin position="320"/>
        <end position="407"/>
    </location>
</feature>
<feature type="compositionally biased region" description="Basic and acidic residues" evidence="5">
    <location>
        <begin position="320"/>
        <end position="331"/>
    </location>
</feature>
<feature type="compositionally biased region" description="Polar residues" evidence="5">
    <location>
        <begin position="389"/>
        <end position="407"/>
    </location>
</feature>
<feature type="glycosylation site" description="N-linked (GlcNAc...) asparagine" evidence="3">
    <location>
        <position position="59"/>
    </location>
</feature>
<feature type="glycosylation site" description="N-linked (GlcNAc...) asparagine" evidence="3">
    <location>
        <position position="103"/>
    </location>
</feature>
<feature type="glycosylation site" description="N-linked (GlcNAc...) asparagine" evidence="3">
    <location>
        <position position="210"/>
    </location>
</feature>
<feature type="glycosylation site" description="N-linked (GlcNAc...) asparagine" evidence="3">
    <location>
        <position position="231"/>
    </location>
</feature>
<feature type="disulfide bond" evidence="4">
    <location>
        <begin position="60"/>
        <end position="123"/>
    </location>
</feature>
<feature type="disulfide bond" evidence="4">
    <location>
        <begin position="163"/>
        <end position="215"/>
    </location>
</feature>
<feature type="sequence variant" id="VAR_038381" description="In dbSNP:rs2205204." evidence="6">
    <original>R</original>
    <variation>T</variation>
    <location>
        <position position="49"/>
    </location>
</feature>
<feature type="sequence variant" id="VAR_038382" description="In dbSNP:rs11908882.">
    <original>N</original>
    <variation>K</variation>
    <location>
        <position position="156"/>
    </location>
</feature>
<feature type="sequence variant" id="VAR_038383" description="In dbSNP:rs8129968.">
    <original>R</original>
    <variation>W</variation>
    <location>
        <position position="170"/>
    </location>
</feature>
<feature type="sequence variant" id="VAR_038384" description="In dbSNP:rs2837225." evidence="6">
    <original>D</original>
    <variation>E</variation>
    <location>
        <position position="350"/>
    </location>
</feature>
<comment type="function">
    <text evidence="1">Provides, together with MAGI1, an adhesion machinery at tight junctions, which may regulate the permeability of kidney glomerulus and small intestinal epithelial cells. Mediates calcium-independent homophilic cell adhesion. In testis, it may function as a cell adhesion molecule rather than a tight-junction protein. It may participate in the adhesion between spermatogonia-spermatogonia, spermatogonia-Sertoli cells, and Sertoli cells-Sertoli cells (By similarity).</text>
</comment>
<comment type="subunit">
    <text evidence="1">Interacts with MAGI1 at tight junctions, forms a tripartite complex with NPHS1. Interacts with LNX1 isoform 2 via its PDZ 2 domain, it may also interact with other isoforms containing this domain.</text>
</comment>
<comment type="subcellular location">
    <subcellularLocation>
        <location evidence="2">Apical cell membrane</location>
        <topology evidence="3">Single-pass type I membrane protein</topology>
    </subcellularLocation>
    <subcellularLocation>
        <location evidence="2">Cell junction</location>
        <location evidence="2">Tight junction</location>
    </subcellularLocation>
</comment>
<comment type="miscellaneous">
    <text evidence="8">A protein of the expected size has been detected by antibody binding and Western blot in at least one of the analyzed tissues or cells.</text>
</comment>
<comment type="similarity">
    <text evidence="7">Belongs to the immunoglobulin superfamily.</text>
</comment>
<comment type="sequence caution" evidence="7">
    <conflict type="erroneous gene model prediction">
        <sequence resource="EMBL-CDS" id="CAB90447"/>
    </conflict>
</comment>
<evidence type="ECO:0000250" key="1"/>
<evidence type="ECO:0000250" key="2">
    <source>
        <dbReference type="UniProtKB" id="Q5VJ70"/>
    </source>
</evidence>
<evidence type="ECO:0000255" key="3"/>
<evidence type="ECO:0000255" key="4">
    <source>
        <dbReference type="PROSITE-ProRule" id="PRU00114"/>
    </source>
</evidence>
<evidence type="ECO:0000256" key="5">
    <source>
        <dbReference type="SAM" id="MobiDB-lite"/>
    </source>
</evidence>
<evidence type="ECO:0000269" key="6">
    <source>
    </source>
</evidence>
<evidence type="ECO:0000305" key="7"/>
<evidence type="ECO:0000305" key="8">
    <source>
    </source>
</evidence>
<organism>
    <name type="scientific">Homo sapiens</name>
    <name type="common">Human</name>
    <dbReference type="NCBI Taxonomy" id="9606"/>
    <lineage>
        <taxon>Eukaryota</taxon>
        <taxon>Metazoa</taxon>
        <taxon>Chordata</taxon>
        <taxon>Craniata</taxon>
        <taxon>Vertebrata</taxon>
        <taxon>Euteleostomi</taxon>
        <taxon>Mammalia</taxon>
        <taxon>Eutheria</taxon>
        <taxon>Euarchontoglires</taxon>
        <taxon>Primates</taxon>
        <taxon>Haplorrhini</taxon>
        <taxon>Catarrhini</taxon>
        <taxon>Hominidae</taxon>
        <taxon>Homo</taxon>
    </lineage>
</organism>
<gene>
    <name type="primary">IGSF5</name>
    <name type="synonym">JAM4</name>
</gene>
<protein>
    <recommendedName>
        <fullName>Immunoglobulin superfamily member 5</fullName>
        <shortName>IgSF5</shortName>
    </recommendedName>
    <alternativeName>
        <fullName>Junctional adhesion molecule 4</fullName>
        <shortName>JAM-4</shortName>
    </alternativeName>
</protein>
<dbReference type="EMBL" id="AK092516">
    <property type="status" value="NOT_ANNOTATED_CDS"/>
    <property type="molecule type" value="mRNA"/>
</dbReference>
<dbReference type="EMBL" id="AL163280">
    <property type="protein sequence ID" value="CAB90447.1"/>
    <property type="status" value="ALT_SEQ"/>
    <property type="molecule type" value="Genomic_DNA"/>
</dbReference>
<dbReference type="CCDS" id="CCDS33562.1"/>
<dbReference type="RefSeq" id="NP_001073913.1">
    <property type="nucleotide sequence ID" value="NM_001080444.2"/>
</dbReference>
<dbReference type="SMR" id="Q9NSI5"/>
<dbReference type="BioGRID" id="127259">
    <property type="interactions" value="19"/>
</dbReference>
<dbReference type="FunCoup" id="Q9NSI5">
    <property type="interactions" value="174"/>
</dbReference>
<dbReference type="IntAct" id="Q9NSI5">
    <property type="interactions" value="8"/>
</dbReference>
<dbReference type="STRING" id="9606.ENSP00000369962"/>
<dbReference type="GlyConnect" id="1393">
    <property type="glycosylation" value="1 N-Linked glycan (1 site)"/>
</dbReference>
<dbReference type="GlyCosmos" id="Q9NSI5">
    <property type="glycosylation" value="4 sites, 1 glycan"/>
</dbReference>
<dbReference type="GlyGen" id="Q9NSI5">
    <property type="glycosylation" value="4 sites, 1 N-linked glycan (1 site)"/>
</dbReference>
<dbReference type="iPTMnet" id="Q9NSI5"/>
<dbReference type="PhosphoSitePlus" id="Q9NSI5"/>
<dbReference type="BioMuta" id="IGSF5"/>
<dbReference type="DMDM" id="166918602"/>
<dbReference type="MassIVE" id="Q9NSI5"/>
<dbReference type="PaxDb" id="9606-ENSP00000369962"/>
<dbReference type="ProteomicsDB" id="82554"/>
<dbReference type="Antibodypedia" id="54406">
    <property type="antibodies" value="105 antibodies from 18 providers"/>
</dbReference>
<dbReference type="DNASU" id="150084"/>
<dbReference type="Ensembl" id="ENST00000380588.5">
    <property type="protein sequence ID" value="ENSP00000369962.4"/>
    <property type="gene ID" value="ENSG00000183067.6"/>
</dbReference>
<dbReference type="GeneID" id="150084"/>
<dbReference type="KEGG" id="hsa:150084"/>
<dbReference type="MANE-Select" id="ENST00000380588.5">
    <property type="protein sequence ID" value="ENSP00000369962.4"/>
    <property type="RefSeq nucleotide sequence ID" value="NM_001080444.2"/>
    <property type="RefSeq protein sequence ID" value="NP_001073913.1"/>
</dbReference>
<dbReference type="UCSC" id="uc002yyo.3">
    <property type="organism name" value="human"/>
</dbReference>
<dbReference type="AGR" id="HGNC:5952"/>
<dbReference type="CTD" id="150084"/>
<dbReference type="DisGeNET" id="150084"/>
<dbReference type="GeneCards" id="IGSF5"/>
<dbReference type="HGNC" id="HGNC:5952">
    <property type="gene designation" value="IGSF5"/>
</dbReference>
<dbReference type="HPA" id="ENSG00000183067">
    <property type="expression patterns" value="Low tissue specificity"/>
</dbReference>
<dbReference type="MIM" id="610638">
    <property type="type" value="gene"/>
</dbReference>
<dbReference type="neXtProt" id="NX_Q9NSI5"/>
<dbReference type="OpenTargets" id="ENSG00000183067"/>
<dbReference type="PharmGKB" id="PA29765"/>
<dbReference type="VEuPathDB" id="HostDB:ENSG00000183067"/>
<dbReference type="eggNOG" id="ENOG502S015">
    <property type="taxonomic scope" value="Eukaryota"/>
</dbReference>
<dbReference type="GeneTree" id="ENSGT00940000163947"/>
<dbReference type="HOGENOM" id="CLU_063888_1_0_1"/>
<dbReference type="InParanoid" id="Q9NSI5"/>
<dbReference type="OMA" id="HSSYYFV"/>
<dbReference type="OrthoDB" id="8822248at2759"/>
<dbReference type="PAN-GO" id="Q9NSI5">
    <property type="GO annotations" value="3 GO annotations based on evolutionary models"/>
</dbReference>
<dbReference type="PhylomeDB" id="Q9NSI5"/>
<dbReference type="TreeFam" id="TF335729"/>
<dbReference type="PathwayCommons" id="Q9NSI5"/>
<dbReference type="SignaLink" id="Q9NSI5"/>
<dbReference type="BioGRID-ORCS" id="150084">
    <property type="hits" value="41 hits in 1146 CRISPR screens"/>
</dbReference>
<dbReference type="ChiTaRS" id="IGSF5">
    <property type="organism name" value="human"/>
</dbReference>
<dbReference type="GenomeRNAi" id="150084"/>
<dbReference type="Pharos" id="Q9NSI5">
    <property type="development level" value="Tbio"/>
</dbReference>
<dbReference type="PRO" id="PR:Q9NSI5"/>
<dbReference type="Proteomes" id="UP000005640">
    <property type="component" value="Chromosome 21"/>
</dbReference>
<dbReference type="RNAct" id="Q9NSI5">
    <property type="molecule type" value="protein"/>
</dbReference>
<dbReference type="Bgee" id="ENSG00000183067">
    <property type="expression patterns" value="Expressed in primordial germ cell in gonad and 93 other cell types or tissues"/>
</dbReference>
<dbReference type="GO" id="GO:0016324">
    <property type="term" value="C:apical plasma membrane"/>
    <property type="evidence" value="ECO:0007669"/>
    <property type="project" value="UniProtKB-SubCell"/>
</dbReference>
<dbReference type="GO" id="GO:0005923">
    <property type="term" value="C:bicellular tight junction"/>
    <property type="evidence" value="ECO:0000318"/>
    <property type="project" value="GO_Central"/>
</dbReference>
<dbReference type="GO" id="GO:0009986">
    <property type="term" value="C:cell surface"/>
    <property type="evidence" value="ECO:0000318"/>
    <property type="project" value="GO_Central"/>
</dbReference>
<dbReference type="GO" id="GO:0098609">
    <property type="term" value="P:cell-cell adhesion"/>
    <property type="evidence" value="ECO:0000318"/>
    <property type="project" value="GO_Central"/>
</dbReference>
<dbReference type="FunFam" id="2.60.40.10:FF:001503">
    <property type="entry name" value="Immunoglobulin superfamily member 5"/>
    <property type="match status" value="1"/>
</dbReference>
<dbReference type="FunFam" id="2.60.40.10:FF:001261">
    <property type="entry name" value="immunoglobulin superfamily member 5"/>
    <property type="match status" value="1"/>
</dbReference>
<dbReference type="Gene3D" id="2.60.40.10">
    <property type="entry name" value="Immunoglobulins"/>
    <property type="match status" value="2"/>
</dbReference>
<dbReference type="InterPro" id="IPR007110">
    <property type="entry name" value="Ig-like_dom"/>
</dbReference>
<dbReference type="InterPro" id="IPR036179">
    <property type="entry name" value="Ig-like_dom_sf"/>
</dbReference>
<dbReference type="InterPro" id="IPR013783">
    <property type="entry name" value="Ig-like_fold"/>
</dbReference>
<dbReference type="InterPro" id="IPR013098">
    <property type="entry name" value="Ig_I-set"/>
</dbReference>
<dbReference type="InterPro" id="IPR003599">
    <property type="entry name" value="Ig_sub"/>
</dbReference>
<dbReference type="PANTHER" id="PTHR44991">
    <property type="entry name" value="IMMUNOGLOBULIN SUPERFAMILY MEMBER 5"/>
    <property type="match status" value="1"/>
</dbReference>
<dbReference type="PANTHER" id="PTHR44991:SF1">
    <property type="entry name" value="IMMUNOGLOBULIN SUPERFAMILY MEMBER 5"/>
    <property type="match status" value="1"/>
</dbReference>
<dbReference type="Pfam" id="PF07679">
    <property type="entry name" value="I-set"/>
    <property type="match status" value="1"/>
</dbReference>
<dbReference type="SMART" id="SM00409">
    <property type="entry name" value="IG"/>
    <property type="match status" value="2"/>
</dbReference>
<dbReference type="SUPFAM" id="SSF48726">
    <property type="entry name" value="Immunoglobulin"/>
    <property type="match status" value="2"/>
</dbReference>
<dbReference type="PROSITE" id="PS50835">
    <property type="entry name" value="IG_LIKE"/>
    <property type="match status" value="2"/>
</dbReference>
<name>IGSF5_HUMAN</name>
<accession>Q9NSI5</accession>
<sequence length="407" mass="44593">MGQKERSTADTLPDLEEWKSAAGLRWWQTAVVDGSGSGNEVIEGPQNARVLKGSQARFNCTVSQGWKLIMWALSDMVVLSVRPMEPIITNDRFTSQRYDQGGNFTSEMIIHNVEPSDSGNIRCSLQNSRLHGSAYLTVQVMGELFIPSVNLVVAENEPCEVTCLPSHWTRLPDISWELGLLVSHSSYYFVPEPSDLQSAVSILALTPQSNGTLTCVATWKSLKARKSATVNLTVIRCPQDTGGGINIPGVLSSLPSLGFSLPTWGKVGLGLAGTMLLTPTCTLTIRCCCCRRRCCGCNCCCRCCFCCRRKRGFRIQFQKKSEKEKTNKETETESGNENSGYNSDEQKTTDTASLPPKSCESSDPEQRNSSCGPPHQRADQRPPRPASHPQASFNLASPEKVSNTTVV</sequence>
<reference key="1">
    <citation type="journal article" date="2004" name="Nat. Genet.">
        <title>Complete sequencing and characterization of 21,243 full-length human cDNAs.</title>
        <authorList>
            <person name="Ota T."/>
            <person name="Suzuki Y."/>
            <person name="Nishikawa T."/>
            <person name="Otsuki T."/>
            <person name="Sugiyama T."/>
            <person name="Irie R."/>
            <person name="Wakamatsu A."/>
            <person name="Hayashi K."/>
            <person name="Sato H."/>
            <person name="Nagai K."/>
            <person name="Kimura K."/>
            <person name="Makita H."/>
            <person name="Sekine M."/>
            <person name="Obayashi M."/>
            <person name="Nishi T."/>
            <person name="Shibahara T."/>
            <person name="Tanaka T."/>
            <person name="Ishii S."/>
            <person name="Yamamoto J."/>
            <person name="Saito K."/>
            <person name="Kawai Y."/>
            <person name="Isono Y."/>
            <person name="Nakamura Y."/>
            <person name="Nagahari K."/>
            <person name="Murakami K."/>
            <person name="Yasuda T."/>
            <person name="Iwayanagi T."/>
            <person name="Wagatsuma M."/>
            <person name="Shiratori A."/>
            <person name="Sudo H."/>
            <person name="Hosoiri T."/>
            <person name="Kaku Y."/>
            <person name="Kodaira H."/>
            <person name="Kondo H."/>
            <person name="Sugawara M."/>
            <person name="Takahashi M."/>
            <person name="Kanda K."/>
            <person name="Yokoi T."/>
            <person name="Furuya T."/>
            <person name="Kikkawa E."/>
            <person name="Omura Y."/>
            <person name="Abe K."/>
            <person name="Kamihara K."/>
            <person name="Katsuta N."/>
            <person name="Sato K."/>
            <person name="Tanikawa M."/>
            <person name="Yamazaki M."/>
            <person name="Ninomiya K."/>
            <person name="Ishibashi T."/>
            <person name="Yamashita H."/>
            <person name="Murakawa K."/>
            <person name="Fujimori K."/>
            <person name="Tanai H."/>
            <person name="Kimata M."/>
            <person name="Watanabe M."/>
            <person name="Hiraoka S."/>
            <person name="Chiba Y."/>
            <person name="Ishida S."/>
            <person name="Ono Y."/>
            <person name="Takiguchi S."/>
            <person name="Watanabe S."/>
            <person name="Yosida M."/>
            <person name="Hotuta T."/>
            <person name="Kusano J."/>
            <person name="Kanehori K."/>
            <person name="Takahashi-Fujii A."/>
            <person name="Hara H."/>
            <person name="Tanase T.-O."/>
            <person name="Nomura Y."/>
            <person name="Togiya S."/>
            <person name="Komai F."/>
            <person name="Hara R."/>
            <person name="Takeuchi K."/>
            <person name="Arita M."/>
            <person name="Imose N."/>
            <person name="Musashino K."/>
            <person name="Yuuki H."/>
            <person name="Oshima A."/>
            <person name="Sasaki N."/>
            <person name="Aotsuka S."/>
            <person name="Yoshikawa Y."/>
            <person name="Matsunawa H."/>
            <person name="Ichihara T."/>
            <person name="Shiohata N."/>
            <person name="Sano S."/>
            <person name="Moriya S."/>
            <person name="Momiyama H."/>
            <person name="Satoh N."/>
            <person name="Takami S."/>
            <person name="Terashima Y."/>
            <person name="Suzuki O."/>
            <person name="Nakagawa S."/>
            <person name="Senoh A."/>
            <person name="Mizoguchi H."/>
            <person name="Goto Y."/>
            <person name="Shimizu F."/>
            <person name="Wakebe H."/>
            <person name="Hishigaki H."/>
            <person name="Watanabe T."/>
            <person name="Sugiyama A."/>
            <person name="Takemoto M."/>
            <person name="Kawakami B."/>
            <person name="Yamazaki M."/>
            <person name="Watanabe K."/>
            <person name="Kumagai A."/>
            <person name="Itakura S."/>
            <person name="Fukuzumi Y."/>
            <person name="Fujimori Y."/>
            <person name="Komiyama M."/>
            <person name="Tashiro H."/>
            <person name="Tanigami A."/>
            <person name="Fujiwara T."/>
            <person name="Ono T."/>
            <person name="Yamada K."/>
            <person name="Fujii Y."/>
            <person name="Ozaki K."/>
            <person name="Hirao M."/>
            <person name="Ohmori Y."/>
            <person name="Kawabata A."/>
            <person name="Hikiji T."/>
            <person name="Kobatake N."/>
            <person name="Inagaki H."/>
            <person name="Ikema Y."/>
            <person name="Okamoto S."/>
            <person name="Okitani R."/>
            <person name="Kawakami T."/>
            <person name="Noguchi S."/>
            <person name="Itoh T."/>
            <person name="Shigeta K."/>
            <person name="Senba T."/>
            <person name="Matsumura K."/>
            <person name="Nakajima Y."/>
            <person name="Mizuno T."/>
            <person name="Morinaga M."/>
            <person name="Sasaki M."/>
            <person name="Togashi T."/>
            <person name="Oyama M."/>
            <person name="Hata H."/>
            <person name="Watanabe M."/>
            <person name="Komatsu T."/>
            <person name="Mizushima-Sugano J."/>
            <person name="Satoh T."/>
            <person name="Shirai Y."/>
            <person name="Takahashi Y."/>
            <person name="Nakagawa K."/>
            <person name="Okumura K."/>
            <person name="Nagase T."/>
            <person name="Nomura N."/>
            <person name="Kikuchi H."/>
            <person name="Masuho Y."/>
            <person name="Yamashita R."/>
            <person name="Nakai K."/>
            <person name="Yada T."/>
            <person name="Nakamura Y."/>
            <person name="Ohara O."/>
            <person name="Isogai T."/>
            <person name="Sugano S."/>
        </authorList>
    </citation>
    <scope>NUCLEOTIDE SEQUENCE [LARGE SCALE MRNA]</scope>
    <scope>VARIANTS THR-49 AND GLU-350</scope>
</reference>
<reference key="2">
    <citation type="journal article" date="2000" name="Nature">
        <title>The DNA sequence of human chromosome 21.</title>
        <authorList>
            <person name="Hattori M."/>
            <person name="Fujiyama A."/>
            <person name="Taylor T.D."/>
            <person name="Watanabe H."/>
            <person name="Yada T."/>
            <person name="Park H.-S."/>
            <person name="Toyoda A."/>
            <person name="Ishii K."/>
            <person name="Totoki Y."/>
            <person name="Choi D.-K."/>
            <person name="Groner Y."/>
            <person name="Soeda E."/>
            <person name="Ohki M."/>
            <person name="Takagi T."/>
            <person name="Sakaki Y."/>
            <person name="Taudien S."/>
            <person name="Blechschmidt K."/>
            <person name="Polley A."/>
            <person name="Menzel U."/>
            <person name="Delabar J."/>
            <person name="Kumpf K."/>
            <person name="Lehmann R."/>
            <person name="Patterson D."/>
            <person name="Reichwald K."/>
            <person name="Rump A."/>
            <person name="Schillhabel M."/>
            <person name="Schudy A."/>
            <person name="Zimmermann W."/>
            <person name="Rosenthal A."/>
            <person name="Kudoh J."/>
            <person name="Shibuya K."/>
            <person name="Kawasaki K."/>
            <person name="Asakawa S."/>
            <person name="Shintani A."/>
            <person name="Sasaki T."/>
            <person name="Nagamine K."/>
            <person name="Mitsuyama S."/>
            <person name="Antonarakis S.E."/>
            <person name="Minoshima S."/>
            <person name="Shimizu N."/>
            <person name="Nordsiek G."/>
            <person name="Hornischer K."/>
            <person name="Brandt P."/>
            <person name="Scharfe M."/>
            <person name="Schoen O."/>
            <person name="Desario A."/>
            <person name="Reichelt J."/>
            <person name="Kauer G."/>
            <person name="Bloecker H."/>
            <person name="Ramser J."/>
            <person name="Beck A."/>
            <person name="Klages S."/>
            <person name="Hennig S."/>
            <person name="Riesselmann L."/>
            <person name="Dagand E."/>
            <person name="Wehrmeyer S."/>
            <person name="Borzym K."/>
            <person name="Gardiner K."/>
            <person name="Nizetic D."/>
            <person name="Francis F."/>
            <person name="Lehrach H."/>
            <person name="Reinhardt R."/>
            <person name="Yaspo M.-L."/>
        </authorList>
    </citation>
    <scope>NUCLEOTIDE SEQUENCE [LARGE SCALE GENOMIC DNA]</scope>
</reference>
<reference key="3">
    <citation type="journal article" date="2012" name="Mol. Cell. Proteomics">
        <title>Antibody-based protein profiling of the human chromosome 21.</title>
        <authorList>
            <person name="Uhlen M."/>
            <person name="Oksvold P."/>
            <person name="Algenas C."/>
            <person name="Hamsten C."/>
            <person name="Fagerberg L."/>
            <person name="Klevebring D."/>
            <person name="Lundberg E."/>
            <person name="Odeberg J."/>
            <person name="Ponten F."/>
            <person name="Kondo T."/>
            <person name="Sivertsson A."/>
        </authorList>
    </citation>
    <scope>MISCELLANEOUS</scope>
</reference>
<proteinExistence type="evidence at protein level"/>